<protein>
    <recommendedName>
        <fullName evidence="2">Peroxidase 3</fullName>
        <ecNumber>1.11.1.7</ecNumber>
    </recommendedName>
</protein>
<name>PER3_VITVI</name>
<keyword id="KW-0106">Calcium</keyword>
<keyword id="KW-0903">Direct protein sequencing</keyword>
<keyword id="KW-0349">Heme</keyword>
<keyword id="KW-0376">Hydrogen peroxide</keyword>
<keyword id="KW-0408">Iron</keyword>
<keyword id="KW-0479">Metal-binding</keyword>
<keyword id="KW-0560">Oxidoreductase</keyword>
<keyword id="KW-0575">Peroxidase</keyword>
<keyword id="KW-0964">Secreted</keyword>
<feature type="chain" id="PRO_0000352653" description="Peroxidase 3">
    <location>
        <begin position="1" status="less than"/>
        <end position="41" status="greater than"/>
    </location>
</feature>
<feature type="unsure residue" description="Q or K">
    <location>
        <position position="1"/>
    </location>
</feature>
<feature type="unsure residue" description="F or M">
    <location>
        <position position="3"/>
    </location>
</feature>
<feature type="unsure residue" description="I or L">
    <location>
        <position position="6"/>
    </location>
</feature>
<feature type="unsure residue" description="L or I">
    <location>
        <position position="10"/>
    </location>
</feature>
<feature type="unsure residue" description="L or I">
    <location>
        <position position="17"/>
    </location>
</feature>
<feature type="unsure residue" description="L or I">
    <location>
        <position position="19"/>
    </location>
</feature>
<feature type="unsure residue" description="F or M">
    <location>
        <position position="24"/>
    </location>
</feature>
<feature type="unsure residue" description="K or Q">
    <location>
        <position position="29"/>
    </location>
</feature>
<feature type="unsure residue" description="I or L">
    <location>
        <position position="35"/>
    </location>
</feature>
<feature type="unsure residue" description="L or I">
    <location>
        <position position="36"/>
    </location>
</feature>
<feature type="unsure residue" description="M or F">
    <location>
        <position position="38"/>
    </location>
</feature>
<feature type="non-consecutive residues" evidence="4">
    <location>
        <begin position="11"/>
        <end position="12"/>
    </location>
</feature>
<feature type="non-consecutive residues" evidence="4">
    <location>
        <begin position="30"/>
        <end position="31"/>
    </location>
</feature>
<feature type="non-terminal residue">
    <location>
        <position position="1"/>
    </location>
</feature>
<feature type="non-terminal residue">
    <location>
        <position position="41"/>
    </location>
</feature>
<proteinExistence type="evidence at protein level"/>
<comment type="function">
    <text evidence="4">Removal of H(2)O(2), oxidation of toxic reductants, biosynthesis and degradation of lignin, suberization, auxin catabolism, response to environmental stresses such as wounding, pathogen attack and oxidative stress. These functions might be dependent on each isozyme/isoform in each plant tissue.</text>
</comment>
<comment type="catalytic activity">
    <reaction>
        <text>2 a phenolic donor + H2O2 = 2 a phenolic radical donor + 2 H2O</text>
        <dbReference type="Rhea" id="RHEA:56136"/>
        <dbReference type="ChEBI" id="CHEBI:15377"/>
        <dbReference type="ChEBI" id="CHEBI:16240"/>
        <dbReference type="ChEBI" id="CHEBI:139520"/>
        <dbReference type="ChEBI" id="CHEBI:139521"/>
        <dbReference type="EC" id="1.11.1.7"/>
    </reaction>
</comment>
<comment type="cofactor">
    <cofactor evidence="2 3">
        <name>heme b</name>
        <dbReference type="ChEBI" id="CHEBI:60344"/>
    </cofactor>
    <text evidence="2 3">Binds 1 heme b (iron(II)-protoporphyrin IX) group per subunit.</text>
</comment>
<comment type="cofactor">
    <cofactor evidence="2 3">
        <name>Ca(2+)</name>
        <dbReference type="ChEBI" id="CHEBI:29108"/>
    </cofactor>
    <text evidence="2 3">Binds 2 calcium ions per subunit.</text>
</comment>
<comment type="subcellular location">
    <subcellularLocation>
        <location evidence="1 3">Secreted</location>
    </subcellularLocation>
</comment>
<comment type="similarity">
    <text evidence="3">Belongs to the peroxidase family. Classical plant (class III) peroxidase subfamily.</text>
</comment>
<accession>P86015</accession>
<dbReference type="EC" id="1.11.1.7"/>
<dbReference type="SMR" id="P86015"/>
<dbReference type="GO" id="GO:0005576">
    <property type="term" value="C:extracellular region"/>
    <property type="evidence" value="ECO:0007669"/>
    <property type="project" value="UniProtKB-SubCell"/>
</dbReference>
<dbReference type="GO" id="GO:0140825">
    <property type="term" value="F:lactoperoxidase activity"/>
    <property type="evidence" value="ECO:0007669"/>
    <property type="project" value="UniProtKB-EC"/>
</dbReference>
<dbReference type="GO" id="GO:0046872">
    <property type="term" value="F:metal ion binding"/>
    <property type="evidence" value="ECO:0007669"/>
    <property type="project" value="UniProtKB-KW"/>
</dbReference>
<dbReference type="GO" id="GO:0042744">
    <property type="term" value="P:hydrogen peroxide catabolic process"/>
    <property type="evidence" value="ECO:0007669"/>
    <property type="project" value="UniProtKB-KW"/>
</dbReference>
<organism>
    <name type="scientific">Vitis vinifera</name>
    <name type="common">Grape</name>
    <dbReference type="NCBI Taxonomy" id="29760"/>
    <lineage>
        <taxon>Eukaryota</taxon>
        <taxon>Viridiplantae</taxon>
        <taxon>Streptophyta</taxon>
        <taxon>Embryophyta</taxon>
        <taxon>Tracheophyta</taxon>
        <taxon>Spermatophyta</taxon>
        <taxon>Magnoliopsida</taxon>
        <taxon>eudicotyledons</taxon>
        <taxon>Gunneridae</taxon>
        <taxon>Pentapetalae</taxon>
        <taxon>rosids</taxon>
        <taxon>Vitales</taxon>
        <taxon>Vitaceae</taxon>
        <taxon>Viteae</taxon>
        <taxon>Vitis</taxon>
    </lineage>
</organism>
<sequence length="41" mass="4391">QTFVTIPGTLRDHPDNLSLAGDGFDTVIKVSCADILTMATR</sequence>
<evidence type="ECO:0000250" key="1">
    <source>
        <dbReference type="UniProtKB" id="P84516"/>
    </source>
</evidence>
<evidence type="ECO:0000250" key="2">
    <source>
        <dbReference type="UniProtKB" id="Q39034"/>
    </source>
</evidence>
<evidence type="ECO:0000255" key="3">
    <source>
        <dbReference type="PROSITE-ProRule" id="PRU00297"/>
    </source>
</evidence>
<evidence type="ECO:0000305" key="4"/>
<reference evidence="4" key="1">
    <citation type="submission" date="2008-07" db="UniProtKB">
        <authorList>
            <person name="Almagro L."/>
            <person name="Belchi-Navarro S."/>
            <person name="Pedreno M.A."/>
        </authorList>
    </citation>
    <scope>PROTEIN SEQUENCE</scope>
</reference>